<keyword id="KW-0143">Chaperone</keyword>
<keyword id="KW-1185">Reference proteome</keyword>
<protein>
    <recommendedName>
        <fullName>Co-chaperone protein HscB</fullName>
    </recommendedName>
    <alternativeName>
        <fullName>Hsc20</fullName>
    </alternativeName>
</protein>
<dbReference type="EMBL" id="AE005174">
    <property type="protein sequence ID" value="AAG57641.1"/>
    <property type="molecule type" value="Genomic_DNA"/>
</dbReference>
<dbReference type="EMBL" id="BA000007">
    <property type="protein sequence ID" value="BAB36816.1"/>
    <property type="molecule type" value="Genomic_DNA"/>
</dbReference>
<dbReference type="PIR" id="A91053">
    <property type="entry name" value="A91053"/>
</dbReference>
<dbReference type="RefSeq" id="NP_311420.1">
    <property type="nucleotide sequence ID" value="NC_002695.1"/>
</dbReference>
<dbReference type="RefSeq" id="WP_000384413.1">
    <property type="nucleotide sequence ID" value="NZ_VOAI01000001.1"/>
</dbReference>
<dbReference type="SMR" id="P0A6M1"/>
<dbReference type="MINT" id="P0A6M1"/>
<dbReference type="STRING" id="155864.Z3794"/>
<dbReference type="GeneID" id="75172640"/>
<dbReference type="GeneID" id="915200"/>
<dbReference type="KEGG" id="ece:Z3794"/>
<dbReference type="KEGG" id="ecs:ECs_3393"/>
<dbReference type="PATRIC" id="fig|386585.9.peg.3544"/>
<dbReference type="eggNOG" id="COG1076">
    <property type="taxonomic scope" value="Bacteria"/>
</dbReference>
<dbReference type="HOGENOM" id="CLU_068529_2_0_6"/>
<dbReference type="OMA" id="LMFIERF"/>
<dbReference type="Proteomes" id="UP000000558">
    <property type="component" value="Chromosome"/>
</dbReference>
<dbReference type="Proteomes" id="UP000002519">
    <property type="component" value="Chromosome"/>
</dbReference>
<dbReference type="GO" id="GO:1990230">
    <property type="term" value="C:iron-sulfur cluster transfer complex"/>
    <property type="evidence" value="ECO:0007669"/>
    <property type="project" value="TreeGrafter"/>
</dbReference>
<dbReference type="GO" id="GO:0001671">
    <property type="term" value="F:ATPase activator activity"/>
    <property type="evidence" value="ECO:0007669"/>
    <property type="project" value="InterPro"/>
</dbReference>
<dbReference type="GO" id="GO:0051087">
    <property type="term" value="F:protein-folding chaperone binding"/>
    <property type="evidence" value="ECO:0007669"/>
    <property type="project" value="InterPro"/>
</dbReference>
<dbReference type="GO" id="GO:0044571">
    <property type="term" value="P:[2Fe-2S] cluster assembly"/>
    <property type="evidence" value="ECO:0007669"/>
    <property type="project" value="InterPro"/>
</dbReference>
<dbReference type="GO" id="GO:0051259">
    <property type="term" value="P:protein complex oligomerization"/>
    <property type="evidence" value="ECO:0007669"/>
    <property type="project" value="InterPro"/>
</dbReference>
<dbReference type="GO" id="GO:0006457">
    <property type="term" value="P:protein folding"/>
    <property type="evidence" value="ECO:0007669"/>
    <property type="project" value="UniProtKB-UniRule"/>
</dbReference>
<dbReference type="CDD" id="cd06257">
    <property type="entry name" value="DnaJ"/>
    <property type="match status" value="1"/>
</dbReference>
<dbReference type="FunFam" id="1.10.287.110:FF:000008">
    <property type="entry name" value="Co-chaperone protein HscB"/>
    <property type="match status" value="1"/>
</dbReference>
<dbReference type="FunFam" id="1.20.1280.20:FF:000001">
    <property type="entry name" value="Co-chaperone protein HscB"/>
    <property type="match status" value="1"/>
</dbReference>
<dbReference type="Gene3D" id="1.10.287.110">
    <property type="entry name" value="DnaJ domain"/>
    <property type="match status" value="1"/>
</dbReference>
<dbReference type="Gene3D" id="1.20.1280.20">
    <property type="entry name" value="HscB, C-terminal domain"/>
    <property type="match status" value="1"/>
</dbReference>
<dbReference type="HAMAP" id="MF_00682">
    <property type="entry name" value="HscB"/>
    <property type="match status" value="1"/>
</dbReference>
<dbReference type="InterPro" id="IPR001623">
    <property type="entry name" value="DnaJ_domain"/>
</dbReference>
<dbReference type="InterPro" id="IPR004640">
    <property type="entry name" value="HscB"/>
</dbReference>
<dbReference type="InterPro" id="IPR036386">
    <property type="entry name" value="HscB_C_sf"/>
</dbReference>
<dbReference type="InterPro" id="IPR009073">
    <property type="entry name" value="HscB_oligo_C"/>
</dbReference>
<dbReference type="InterPro" id="IPR036869">
    <property type="entry name" value="J_dom_sf"/>
</dbReference>
<dbReference type="NCBIfam" id="TIGR00714">
    <property type="entry name" value="hscB"/>
    <property type="match status" value="1"/>
</dbReference>
<dbReference type="NCBIfam" id="NF003449">
    <property type="entry name" value="PRK05014.1"/>
    <property type="match status" value="1"/>
</dbReference>
<dbReference type="PANTHER" id="PTHR14021">
    <property type="entry name" value="IRON-SULFUR CLUSTER CO-CHAPERONE PROTEIN HSCB"/>
    <property type="match status" value="1"/>
</dbReference>
<dbReference type="PANTHER" id="PTHR14021:SF15">
    <property type="entry name" value="IRON-SULFUR CLUSTER CO-CHAPERONE PROTEIN HSCB"/>
    <property type="match status" value="1"/>
</dbReference>
<dbReference type="Pfam" id="PF07743">
    <property type="entry name" value="HSCB_C"/>
    <property type="match status" value="1"/>
</dbReference>
<dbReference type="SMART" id="SM00271">
    <property type="entry name" value="DnaJ"/>
    <property type="match status" value="1"/>
</dbReference>
<dbReference type="SUPFAM" id="SSF46565">
    <property type="entry name" value="Chaperone J-domain"/>
    <property type="match status" value="1"/>
</dbReference>
<dbReference type="SUPFAM" id="SSF47144">
    <property type="entry name" value="HSC20 (HSCB), C-terminal oligomerisation domain"/>
    <property type="match status" value="1"/>
</dbReference>
<dbReference type="PROSITE" id="PS50076">
    <property type="entry name" value="DNAJ_2"/>
    <property type="match status" value="1"/>
</dbReference>
<reference key="1">
    <citation type="journal article" date="2001" name="Nature">
        <title>Genome sequence of enterohaemorrhagic Escherichia coli O157:H7.</title>
        <authorList>
            <person name="Perna N.T."/>
            <person name="Plunkett G. III"/>
            <person name="Burland V."/>
            <person name="Mau B."/>
            <person name="Glasner J.D."/>
            <person name="Rose D.J."/>
            <person name="Mayhew G.F."/>
            <person name="Evans P.S."/>
            <person name="Gregor J."/>
            <person name="Kirkpatrick H.A."/>
            <person name="Posfai G."/>
            <person name="Hackett J."/>
            <person name="Klink S."/>
            <person name="Boutin A."/>
            <person name="Shao Y."/>
            <person name="Miller L."/>
            <person name="Grotbeck E.J."/>
            <person name="Davis N.W."/>
            <person name="Lim A."/>
            <person name="Dimalanta E.T."/>
            <person name="Potamousis K."/>
            <person name="Apodaca J."/>
            <person name="Anantharaman T.S."/>
            <person name="Lin J."/>
            <person name="Yen G."/>
            <person name="Schwartz D.C."/>
            <person name="Welch R.A."/>
            <person name="Blattner F.R."/>
        </authorList>
    </citation>
    <scope>NUCLEOTIDE SEQUENCE [LARGE SCALE GENOMIC DNA]</scope>
    <source>
        <strain>O157:H7 / EDL933 / ATCC 700927 / EHEC</strain>
    </source>
</reference>
<reference key="2">
    <citation type="journal article" date="2001" name="DNA Res.">
        <title>Complete genome sequence of enterohemorrhagic Escherichia coli O157:H7 and genomic comparison with a laboratory strain K-12.</title>
        <authorList>
            <person name="Hayashi T."/>
            <person name="Makino K."/>
            <person name="Ohnishi M."/>
            <person name="Kurokawa K."/>
            <person name="Ishii K."/>
            <person name="Yokoyama K."/>
            <person name="Han C.-G."/>
            <person name="Ohtsubo E."/>
            <person name="Nakayama K."/>
            <person name="Murata T."/>
            <person name="Tanaka M."/>
            <person name="Tobe T."/>
            <person name="Iida T."/>
            <person name="Takami H."/>
            <person name="Honda T."/>
            <person name="Sasakawa C."/>
            <person name="Ogasawara N."/>
            <person name="Yasunaga T."/>
            <person name="Kuhara S."/>
            <person name="Shiba T."/>
            <person name="Hattori M."/>
            <person name="Shinagawa H."/>
        </authorList>
    </citation>
    <scope>NUCLEOTIDE SEQUENCE [LARGE SCALE GENOMIC DNA]</scope>
    <source>
        <strain>O157:H7 / Sakai / RIMD 0509952 / EHEC</strain>
    </source>
</reference>
<accession>P0A6M1</accession>
<accession>P36540</accession>
<organism>
    <name type="scientific">Escherichia coli O157:H7</name>
    <dbReference type="NCBI Taxonomy" id="83334"/>
    <lineage>
        <taxon>Bacteria</taxon>
        <taxon>Pseudomonadati</taxon>
        <taxon>Pseudomonadota</taxon>
        <taxon>Gammaproteobacteria</taxon>
        <taxon>Enterobacterales</taxon>
        <taxon>Enterobacteriaceae</taxon>
        <taxon>Escherichia</taxon>
    </lineage>
</organism>
<name>HSCB_ECO57</name>
<feature type="chain" id="PRO_0000070968" description="Co-chaperone protein HscB">
    <location>
        <begin position="1"/>
        <end position="171"/>
    </location>
</feature>
<feature type="domain" description="J">
    <location>
        <begin position="2"/>
        <end position="74"/>
    </location>
</feature>
<gene>
    <name type="primary">hscB</name>
    <name type="ordered locus">Z3794</name>
    <name type="ordered locus">ECs3393</name>
</gene>
<sequence>MDYFTLFGLPARYQLDTQALSLRFQDLQRQYHPDKFASGSQAEQLAAVQQSATINQAWQTLRHPLMRAEYLLSLHGFDLASEQHTVRDTAFLMEQLELREELDEIEQAKDEARLESFIKRVKKMFDTRHQLMVEQLDNETWDAAADTVRKLRFLDKLRSSAEQLEEKLLDF</sequence>
<evidence type="ECO:0000250" key="1"/>
<evidence type="ECO:0000305" key="2"/>
<comment type="function">
    <text evidence="1">Co-chaperone involved in the maturation of iron-sulfur cluster-containing proteins. Seems to help targeting proteins to be folded toward HscA (By similarity).</text>
</comment>
<comment type="subunit">
    <text evidence="1">Interacts with HscA and stimulates its ATPase activity. Interacts with IscU (By similarity).</text>
</comment>
<comment type="similarity">
    <text evidence="2">Belongs to the HscB family.</text>
</comment>
<proteinExistence type="inferred from homology"/>